<feature type="chain" id="PRO_1000202752" description="Thiamine-phosphate synthase">
    <location>
        <begin position="1"/>
        <end position="209"/>
    </location>
</feature>
<feature type="binding site" evidence="1">
    <location>
        <begin position="35"/>
        <end position="39"/>
    </location>
    <ligand>
        <name>4-amino-2-methyl-5-(diphosphooxymethyl)pyrimidine</name>
        <dbReference type="ChEBI" id="CHEBI:57841"/>
    </ligand>
</feature>
<feature type="binding site" evidence="1">
    <location>
        <position position="67"/>
    </location>
    <ligand>
        <name>4-amino-2-methyl-5-(diphosphooxymethyl)pyrimidine</name>
        <dbReference type="ChEBI" id="CHEBI:57841"/>
    </ligand>
</feature>
<feature type="binding site" evidence="1">
    <location>
        <position position="68"/>
    </location>
    <ligand>
        <name>Mg(2+)</name>
        <dbReference type="ChEBI" id="CHEBI:18420"/>
    </ligand>
</feature>
<feature type="binding site" evidence="1">
    <location>
        <position position="86"/>
    </location>
    <ligand>
        <name>Mg(2+)</name>
        <dbReference type="ChEBI" id="CHEBI:18420"/>
    </ligand>
</feature>
<feature type="binding site" evidence="1">
    <location>
        <position position="105"/>
    </location>
    <ligand>
        <name>4-amino-2-methyl-5-(diphosphooxymethyl)pyrimidine</name>
        <dbReference type="ChEBI" id="CHEBI:57841"/>
    </ligand>
</feature>
<feature type="binding site" evidence="1">
    <location>
        <begin position="132"/>
        <end position="134"/>
    </location>
    <ligand>
        <name>2-[(2R,5Z)-2-carboxy-4-methylthiazol-5(2H)-ylidene]ethyl phosphate</name>
        <dbReference type="ChEBI" id="CHEBI:62899"/>
    </ligand>
</feature>
<feature type="binding site" evidence="1">
    <location>
        <position position="135"/>
    </location>
    <ligand>
        <name>4-amino-2-methyl-5-(diphosphooxymethyl)pyrimidine</name>
        <dbReference type="ChEBI" id="CHEBI:57841"/>
    </ligand>
</feature>
<feature type="binding site" evidence="1">
    <location>
        <position position="162"/>
    </location>
    <ligand>
        <name>2-[(2R,5Z)-2-carboxy-4-methylthiazol-5(2H)-ylidene]ethyl phosphate</name>
        <dbReference type="ChEBI" id="CHEBI:62899"/>
    </ligand>
</feature>
<name>THIE_PSEFS</name>
<keyword id="KW-0460">Magnesium</keyword>
<keyword id="KW-0479">Metal-binding</keyword>
<keyword id="KW-0784">Thiamine biosynthesis</keyword>
<keyword id="KW-0808">Transferase</keyword>
<dbReference type="EC" id="2.5.1.3" evidence="1"/>
<dbReference type="EMBL" id="AM181176">
    <property type="protein sequence ID" value="CAY52565.1"/>
    <property type="molecule type" value="Genomic_DNA"/>
</dbReference>
<dbReference type="RefSeq" id="WP_015886046.1">
    <property type="nucleotide sequence ID" value="NC_012660.1"/>
</dbReference>
<dbReference type="SMR" id="C3K2K2"/>
<dbReference type="STRING" id="294.SRM1_05021"/>
<dbReference type="GeneID" id="93467021"/>
<dbReference type="eggNOG" id="COG0352">
    <property type="taxonomic scope" value="Bacteria"/>
</dbReference>
<dbReference type="HOGENOM" id="CLU_018272_3_1_6"/>
<dbReference type="OrthoDB" id="9789949at2"/>
<dbReference type="UniPathway" id="UPA00060">
    <property type="reaction ID" value="UER00141"/>
</dbReference>
<dbReference type="GO" id="GO:0005737">
    <property type="term" value="C:cytoplasm"/>
    <property type="evidence" value="ECO:0007669"/>
    <property type="project" value="TreeGrafter"/>
</dbReference>
<dbReference type="GO" id="GO:0000287">
    <property type="term" value="F:magnesium ion binding"/>
    <property type="evidence" value="ECO:0007669"/>
    <property type="project" value="UniProtKB-UniRule"/>
</dbReference>
<dbReference type="GO" id="GO:0004789">
    <property type="term" value="F:thiamine-phosphate diphosphorylase activity"/>
    <property type="evidence" value="ECO:0007669"/>
    <property type="project" value="UniProtKB-UniRule"/>
</dbReference>
<dbReference type="GO" id="GO:0009228">
    <property type="term" value="P:thiamine biosynthetic process"/>
    <property type="evidence" value="ECO:0007669"/>
    <property type="project" value="UniProtKB-KW"/>
</dbReference>
<dbReference type="GO" id="GO:0009229">
    <property type="term" value="P:thiamine diphosphate biosynthetic process"/>
    <property type="evidence" value="ECO:0007669"/>
    <property type="project" value="UniProtKB-UniRule"/>
</dbReference>
<dbReference type="CDD" id="cd00564">
    <property type="entry name" value="TMP_TenI"/>
    <property type="match status" value="1"/>
</dbReference>
<dbReference type="Gene3D" id="3.20.20.70">
    <property type="entry name" value="Aldolase class I"/>
    <property type="match status" value="1"/>
</dbReference>
<dbReference type="HAMAP" id="MF_00097">
    <property type="entry name" value="TMP_synthase"/>
    <property type="match status" value="1"/>
</dbReference>
<dbReference type="InterPro" id="IPR013785">
    <property type="entry name" value="Aldolase_TIM"/>
</dbReference>
<dbReference type="InterPro" id="IPR036206">
    <property type="entry name" value="ThiamineP_synth_sf"/>
</dbReference>
<dbReference type="InterPro" id="IPR022998">
    <property type="entry name" value="ThiamineP_synth_TenI"/>
</dbReference>
<dbReference type="InterPro" id="IPR034291">
    <property type="entry name" value="TMP_synthase"/>
</dbReference>
<dbReference type="NCBIfam" id="TIGR00693">
    <property type="entry name" value="thiE"/>
    <property type="match status" value="1"/>
</dbReference>
<dbReference type="PANTHER" id="PTHR20857">
    <property type="entry name" value="THIAMINE-PHOSPHATE PYROPHOSPHORYLASE"/>
    <property type="match status" value="1"/>
</dbReference>
<dbReference type="PANTHER" id="PTHR20857:SF15">
    <property type="entry name" value="THIAMINE-PHOSPHATE SYNTHASE"/>
    <property type="match status" value="1"/>
</dbReference>
<dbReference type="Pfam" id="PF02581">
    <property type="entry name" value="TMP-TENI"/>
    <property type="match status" value="1"/>
</dbReference>
<dbReference type="SUPFAM" id="SSF51391">
    <property type="entry name" value="Thiamin phosphate synthase"/>
    <property type="match status" value="1"/>
</dbReference>
<protein>
    <recommendedName>
        <fullName evidence="1">Thiamine-phosphate synthase</fullName>
        <shortName evidence="1">TP synthase</shortName>
        <shortName evidence="1">TPS</shortName>
        <ecNumber evidence="1">2.5.1.3</ecNumber>
    </recommendedName>
    <alternativeName>
        <fullName evidence="1">Thiamine-phosphate pyrophosphorylase</fullName>
        <shortName evidence="1">TMP pyrophosphorylase</shortName>
        <shortName evidence="1">TMP-PPase</shortName>
    </alternativeName>
</protein>
<evidence type="ECO:0000255" key="1">
    <source>
        <dbReference type="HAMAP-Rule" id="MF_00097"/>
    </source>
</evidence>
<organism>
    <name type="scientific">Pseudomonas fluorescens (strain SBW25)</name>
    <dbReference type="NCBI Taxonomy" id="216595"/>
    <lineage>
        <taxon>Bacteria</taxon>
        <taxon>Pseudomonadati</taxon>
        <taxon>Pseudomonadota</taxon>
        <taxon>Gammaproteobacteria</taxon>
        <taxon>Pseudomonadales</taxon>
        <taxon>Pseudomonadaceae</taxon>
        <taxon>Pseudomonas</taxon>
    </lineage>
</organism>
<sequence length="209" mass="22359">MKLRGLYAITDSQLLAGKFLAYVEAALDGGVTLLQYRDKSSDEARRLREAEKLRELCSRYKTQLIINDDAELAARLGVGVHLGQTDGPLTPARALLGSKAIIGSTCHSQIELAEQAAKEGASYVAFGRFFNSNTKPGAPAATVEMLAQARARVQLPICVIGGITLENAEPLVAHGADLLAVVHGLFGADSTQEVTRRARAFNDLLKISV</sequence>
<reference key="1">
    <citation type="journal article" date="2009" name="Genome Biol.">
        <title>Genomic and genetic analyses of diversity and plant interactions of Pseudomonas fluorescens.</title>
        <authorList>
            <person name="Silby M.W."/>
            <person name="Cerdeno-Tarraga A.M."/>
            <person name="Vernikos G.S."/>
            <person name="Giddens S.R."/>
            <person name="Jackson R.W."/>
            <person name="Preston G.M."/>
            <person name="Zhang X.-X."/>
            <person name="Moon C.D."/>
            <person name="Gehrig S.M."/>
            <person name="Godfrey S.A.C."/>
            <person name="Knight C.G."/>
            <person name="Malone J.G."/>
            <person name="Robinson Z."/>
            <person name="Spiers A.J."/>
            <person name="Harris S."/>
            <person name="Challis G.L."/>
            <person name="Yaxley A.M."/>
            <person name="Harris D."/>
            <person name="Seeger K."/>
            <person name="Murphy L."/>
            <person name="Rutter S."/>
            <person name="Squares R."/>
            <person name="Quail M.A."/>
            <person name="Saunders E."/>
            <person name="Mavromatis K."/>
            <person name="Brettin T.S."/>
            <person name="Bentley S.D."/>
            <person name="Hothersall J."/>
            <person name="Stephens E."/>
            <person name="Thomas C.M."/>
            <person name="Parkhill J."/>
            <person name="Levy S.B."/>
            <person name="Rainey P.B."/>
            <person name="Thomson N.R."/>
        </authorList>
    </citation>
    <scope>NUCLEOTIDE SEQUENCE [LARGE SCALE GENOMIC DNA]</scope>
    <source>
        <strain>SBW25</strain>
    </source>
</reference>
<proteinExistence type="inferred from homology"/>
<gene>
    <name evidence="1" type="primary">thiE</name>
    <name type="ordered locus">PFLU_5400</name>
</gene>
<comment type="function">
    <text evidence="1">Condenses 4-methyl-5-(beta-hydroxyethyl)thiazole monophosphate (THZ-P) and 2-methyl-4-amino-5-hydroxymethyl pyrimidine pyrophosphate (HMP-PP) to form thiamine monophosphate (TMP).</text>
</comment>
<comment type="catalytic activity">
    <reaction evidence="1">
        <text>2-[(2R,5Z)-2-carboxy-4-methylthiazol-5(2H)-ylidene]ethyl phosphate + 4-amino-2-methyl-5-(diphosphooxymethyl)pyrimidine + 2 H(+) = thiamine phosphate + CO2 + diphosphate</text>
        <dbReference type="Rhea" id="RHEA:47844"/>
        <dbReference type="ChEBI" id="CHEBI:15378"/>
        <dbReference type="ChEBI" id="CHEBI:16526"/>
        <dbReference type="ChEBI" id="CHEBI:33019"/>
        <dbReference type="ChEBI" id="CHEBI:37575"/>
        <dbReference type="ChEBI" id="CHEBI:57841"/>
        <dbReference type="ChEBI" id="CHEBI:62899"/>
        <dbReference type="EC" id="2.5.1.3"/>
    </reaction>
</comment>
<comment type="catalytic activity">
    <reaction evidence="1">
        <text>2-(2-carboxy-4-methylthiazol-5-yl)ethyl phosphate + 4-amino-2-methyl-5-(diphosphooxymethyl)pyrimidine + 2 H(+) = thiamine phosphate + CO2 + diphosphate</text>
        <dbReference type="Rhea" id="RHEA:47848"/>
        <dbReference type="ChEBI" id="CHEBI:15378"/>
        <dbReference type="ChEBI" id="CHEBI:16526"/>
        <dbReference type="ChEBI" id="CHEBI:33019"/>
        <dbReference type="ChEBI" id="CHEBI:37575"/>
        <dbReference type="ChEBI" id="CHEBI:57841"/>
        <dbReference type="ChEBI" id="CHEBI:62890"/>
        <dbReference type="EC" id="2.5.1.3"/>
    </reaction>
</comment>
<comment type="catalytic activity">
    <reaction evidence="1">
        <text>4-methyl-5-(2-phosphooxyethyl)-thiazole + 4-amino-2-methyl-5-(diphosphooxymethyl)pyrimidine + H(+) = thiamine phosphate + diphosphate</text>
        <dbReference type="Rhea" id="RHEA:22328"/>
        <dbReference type="ChEBI" id="CHEBI:15378"/>
        <dbReference type="ChEBI" id="CHEBI:33019"/>
        <dbReference type="ChEBI" id="CHEBI:37575"/>
        <dbReference type="ChEBI" id="CHEBI:57841"/>
        <dbReference type="ChEBI" id="CHEBI:58296"/>
        <dbReference type="EC" id="2.5.1.3"/>
    </reaction>
</comment>
<comment type="cofactor">
    <cofactor evidence="1">
        <name>Mg(2+)</name>
        <dbReference type="ChEBI" id="CHEBI:18420"/>
    </cofactor>
    <text evidence="1">Binds 1 Mg(2+) ion per subunit.</text>
</comment>
<comment type="pathway">
    <text evidence="1">Cofactor biosynthesis; thiamine diphosphate biosynthesis; thiamine phosphate from 4-amino-2-methyl-5-diphosphomethylpyrimidine and 4-methyl-5-(2-phosphoethyl)-thiazole: step 1/1.</text>
</comment>
<comment type="similarity">
    <text evidence="1">Belongs to the thiamine-phosphate synthase family.</text>
</comment>
<accession>C3K2K2</accession>